<protein>
    <recommendedName>
        <fullName evidence="1">DNA-directed RNA polymerase subunit beta</fullName>
        <shortName evidence="1">RNAP subunit beta</shortName>
        <ecNumber evidence="1">2.7.7.6</ecNumber>
    </recommendedName>
    <alternativeName>
        <fullName evidence="1">RNA polymerase subunit beta</fullName>
    </alternativeName>
    <alternativeName>
        <fullName evidence="1">Transcriptase subunit beta</fullName>
    </alternativeName>
</protein>
<accession>B9M6V2</accession>
<comment type="function">
    <text evidence="1">DNA-dependent RNA polymerase catalyzes the transcription of DNA into RNA using the four ribonucleoside triphosphates as substrates.</text>
</comment>
<comment type="catalytic activity">
    <reaction evidence="1">
        <text>RNA(n) + a ribonucleoside 5'-triphosphate = RNA(n+1) + diphosphate</text>
        <dbReference type="Rhea" id="RHEA:21248"/>
        <dbReference type="Rhea" id="RHEA-COMP:14527"/>
        <dbReference type="Rhea" id="RHEA-COMP:17342"/>
        <dbReference type="ChEBI" id="CHEBI:33019"/>
        <dbReference type="ChEBI" id="CHEBI:61557"/>
        <dbReference type="ChEBI" id="CHEBI:140395"/>
        <dbReference type="EC" id="2.7.7.6"/>
    </reaction>
</comment>
<comment type="subunit">
    <text evidence="1">The RNAP catalytic core consists of 2 alpha, 1 beta, 1 beta' and 1 omega subunit. When a sigma factor is associated with the core the holoenzyme is formed, which can initiate transcription.</text>
</comment>
<comment type="similarity">
    <text evidence="1">Belongs to the RNA polymerase beta chain family.</text>
</comment>
<proteinExistence type="inferred from homology"/>
<evidence type="ECO:0000255" key="1">
    <source>
        <dbReference type="HAMAP-Rule" id="MF_01321"/>
    </source>
</evidence>
<reference key="1">
    <citation type="submission" date="2009-01" db="EMBL/GenBank/DDBJ databases">
        <title>Complete sequence of Geobacter sp. FRC-32.</title>
        <authorList>
            <consortium name="US DOE Joint Genome Institute"/>
            <person name="Lucas S."/>
            <person name="Copeland A."/>
            <person name="Lapidus A."/>
            <person name="Glavina del Rio T."/>
            <person name="Dalin E."/>
            <person name="Tice H."/>
            <person name="Bruce D."/>
            <person name="Goodwin L."/>
            <person name="Pitluck S."/>
            <person name="Saunders E."/>
            <person name="Brettin T."/>
            <person name="Detter J.C."/>
            <person name="Han C."/>
            <person name="Larimer F."/>
            <person name="Land M."/>
            <person name="Hauser L."/>
            <person name="Kyrpides N."/>
            <person name="Ovchinnikova G."/>
            <person name="Kostka J."/>
            <person name="Richardson P."/>
        </authorList>
    </citation>
    <scope>NUCLEOTIDE SEQUENCE [LARGE SCALE GENOMIC DNA]</scope>
    <source>
        <strain>DSM 22248 / JCM 15807 / FRC-32</strain>
    </source>
</reference>
<dbReference type="EC" id="2.7.7.6" evidence="1"/>
<dbReference type="EMBL" id="CP001390">
    <property type="protein sequence ID" value="ACM21973.1"/>
    <property type="molecule type" value="Genomic_DNA"/>
</dbReference>
<dbReference type="RefSeq" id="WP_012648700.1">
    <property type="nucleotide sequence ID" value="NC_011979.1"/>
</dbReference>
<dbReference type="SMR" id="B9M6V2"/>
<dbReference type="STRING" id="316067.Geob_3632"/>
<dbReference type="KEGG" id="geo:Geob_3632"/>
<dbReference type="eggNOG" id="COG0085">
    <property type="taxonomic scope" value="Bacteria"/>
</dbReference>
<dbReference type="HOGENOM" id="CLU_000524_4_0_7"/>
<dbReference type="OrthoDB" id="9803954at2"/>
<dbReference type="Proteomes" id="UP000007721">
    <property type="component" value="Chromosome"/>
</dbReference>
<dbReference type="GO" id="GO:0000428">
    <property type="term" value="C:DNA-directed RNA polymerase complex"/>
    <property type="evidence" value="ECO:0007669"/>
    <property type="project" value="UniProtKB-KW"/>
</dbReference>
<dbReference type="GO" id="GO:0003677">
    <property type="term" value="F:DNA binding"/>
    <property type="evidence" value="ECO:0007669"/>
    <property type="project" value="UniProtKB-UniRule"/>
</dbReference>
<dbReference type="GO" id="GO:0003899">
    <property type="term" value="F:DNA-directed RNA polymerase activity"/>
    <property type="evidence" value="ECO:0007669"/>
    <property type="project" value="UniProtKB-UniRule"/>
</dbReference>
<dbReference type="GO" id="GO:0032549">
    <property type="term" value="F:ribonucleoside binding"/>
    <property type="evidence" value="ECO:0007669"/>
    <property type="project" value="InterPro"/>
</dbReference>
<dbReference type="GO" id="GO:0006351">
    <property type="term" value="P:DNA-templated transcription"/>
    <property type="evidence" value="ECO:0007669"/>
    <property type="project" value="UniProtKB-UniRule"/>
</dbReference>
<dbReference type="CDD" id="cd00653">
    <property type="entry name" value="RNA_pol_B_RPB2"/>
    <property type="match status" value="1"/>
</dbReference>
<dbReference type="FunFam" id="2.40.50.100:FF:000006">
    <property type="entry name" value="DNA-directed RNA polymerase subunit beta"/>
    <property type="match status" value="1"/>
</dbReference>
<dbReference type="FunFam" id="3.90.1800.10:FF:000001">
    <property type="entry name" value="DNA-directed RNA polymerase subunit beta"/>
    <property type="match status" value="1"/>
</dbReference>
<dbReference type="Gene3D" id="2.40.50.100">
    <property type="match status" value="1"/>
</dbReference>
<dbReference type="Gene3D" id="2.40.50.150">
    <property type="match status" value="1"/>
</dbReference>
<dbReference type="Gene3D" id="3.90.1100.10">
    <property type="match status" value="2"/>
</dbReference>
<dbReference type="Gene3D" id="2.30.150.10">
    <property type="entry name" value="DNA-directed RNA polymerase, beta subunit, external 1 domain"/>
    <property type="match status" value="1"/>
</dbReference>
<dbReference type="Gene3D" id="2.40.270.10">
    <property type="entry name" value="DNA-directed RNA polymerase, subunit 2, domain 6"/>
    <property type="match status" value="1"/>
</dbReference>
<dbReference type="Gene3D" id="3.90.1800.10">
    <property type="entry name" value="RNA polymerase alpha subunit dimerisation domain"/>
    <property type="match status" value="1"/>
</dbReference>
<dbReference type="Gene3D" id="3.90.1110.10">
    <property type="entry name" value="RNA polymerase Rpb2, domain 2"/>
    <property type="match status" value="1"/>
</dbReference>
<dbReference type="HAMAP" id="MF_01321">
    <property type="entry name" value="RNApol_bact_RpoB"/>
    <property type="match status" value="1"/>
</dbReference>
<dbReference type="InterPro" id="IPR042107">
    <property type="entry name" value="DNA-dir_RNA_pol_bsu_ext_1_sf"/>
</dbReference>
<dbReference type="InterPro" id="IPR019462">
    <property type="entry name" value="DNA-dir_RNA_pol_bsu_external_1"/>
</dbReference>
<dbReference type="InterPro" id="IPR015712">
    <property type="entry name" value="DNA-dir_RNA_pol_su2"/>
</dbReference>
<dbReference type="InterPro" id="IPR007120">
    <property type="entry name" value="DNA-dir_RNAP_su2_dom"/>
</dbReference>
<dbReference type="InterPro" id="IPR037033">
    <property type="entry name" value="DNA-dir_RNAP_su2_hyb_sf"/>
</dbReference>
<dbReference type="InterPro" id="IPR010243">
    <property type="entry name" value="RNA_pol_bsu_bac"/>
</dbReference>
<dbReference type="InterPro" id="IPR007121">
    <property type="entry name" value="RNA_pol_bsu_CS"/>
</dbReference>
<dbReference type="InterPro" id="IPR007644">
    <property type="entry name" value="RNA_pol_bsu_protrusion"/>
</dbReference>
<dbReference type="InterPro" id="IPR007642">
    <property type="entry name" value="RNA_pol_Rpb2_2"/>
</dbReference>
<dbReference type="InterPro" id="IPR037034">
    <property type="entry name" value="RNA_pol_Rpb2_2_sf"/>
</dbReference>
<dbReference type="InterPro" id="IPR007645">
    <property type="entry name" value="RNA_pol_Rpb2_3"/>
</dbReference>
<dbReference type="InterPro" id="IPR007641">
    <property type="entry name" value="RNA_pol_Rpb2_7"/>
</dbReference>
<dbReference type="InterPro" id="IPR014724">
    <property type="entry name" value="RNA_pol_RPB2_OB-fold"/>
</dbReference>
<dbReference type="NCBIfam" id="NF001616">
    <property type="entry name" value="PRK00405.1"/>
    <property type="match status" value="1"/>
</dbReference>
<dbReference type="NCBIfam" id="TIGR02013">
    <property type="entry name" value="rpoB"/>
    <property type="match status" value="1"/>
</dbReference>
<dbReference type="PANTHER" id="PTHR20856">
    <property type="entry name" value="DNA-DIRECTED RNA POLYMERASE I SUBUNIT 2"/>
    <property type="match status" value="1"/>
</dbReference>
<dbReference type="Pfam" id="PF04563">
    <property type="entry name" value="RNA_pol_Rpb2_1"/>
    <property type="match status" value="1"/>
</dbReference>
<dbReference type="Pfam" id="PF04561">
    <property type="entry name" value="RNA_pol_Rpb2_2"/>
    <property type="match status" value="2"/>
</dbReference>
<dbReference type="Pfam" id="PF04565">
    <property type="entry name" value="RNA_pol_Rpb2_3"/>
    <property type="match status" value="1"/>
</dbReference>
<dbReference type="Pfam" id="PF10385">
    <property type="entry name" value="RNA_pol_Rpb2_45"/>
    <property type="match status" value="1"/>
</dbReference>
<dbReference type="Pfam" id="PF00562">
    <property type="entry name" value="RNA_pol_Rpb2_6"/>
    <property type="match status" value="1"/>
</dbReference>
<dbReference type="Pfam" id="PF04560">
    <property type="entry name" value="RNA_pol_Rpb2_7"/>
    <property type="match status" value="1"/>
</dbReference>
<dbReference type="SUPFAM" id="SSF64484">
    <property type="entry name" value="beta and beta-prime subunits of DNA dependent RNA-polymerase"/>
    <property type="match status" value="1"/>
</dbReference>
<dbReference type="PROSITE" id="PS01166">
    <property type="entry name" value="RNA_POL_BETA"/>
    <property type="match status" value="1"/>
</dbReference>
<keyword id="KW-0240">DNA-directed RNA polymerase</keyword>
<keyword id="KW-0548">Nucleotidyltransferase</keyword>
<keyword id="KW-1185">Reference proteome</keyword>
<keyword id="KW-0804">Transcription</keyword>
<keyword id="KW-0808">Transferase</keyword>
<sequence length="1370" mass="153061">MAYSIANNPLLRKNFAKIKKIIDIPNLIDIQKNSYKRFLQLDVPAEARKYSGLEAVFKSVFPIKDFSETASLEYVSYSLGIPKYDVEECHQRGMTFAAPMKVKVRLVVWDVNKEPSTRSIRDIKEQEVYFGEIPLMTENGTFIINGTERVIVSQLHRSPGVFYDHDKGKTHSSGKVLYSARVIPYRGSWLDFEFDHKDILYVRIDRRRKMPATVLLKALGYSTDELLNFFYKSEEINFAGEKLTKVADPELLTNQKAAIDIVDSATGEVLVKANRKFTKAAIRKMAEHGIKFIPITIEELVGKISSHDIVDPSTGEIVAECNEELTQAKLEEIKSKGINTFKVLFIDNLHVTSSFRDTIIIDKIGSTDDALIEIYRRLRPGDPPTLKSALSLFENLFFNPERYDLSAVGRLKLNYKLGLQVPLDCMTLTREDVLEVVRYLIDLKNGRGNIDDIDHLGNRRVRAVGELLENQYRIGLVRMERAIKERMSLQEVENLMPHDLINSKPVSAVVKEFFGSSQLSQFMDQTNPLSEVTHKRRLSALGPGGLTRERAGFEVRDVHPTHYGRVCPIETPEGPNIGLIASLSTYARINEHGFVETPYRLVQEGKVTNEVRFFSALEEEGHAIAQANAEVDKDGRFVADYISARKSGEFVLVGRDELELMDVAPMQLVSVAASLIPFLENDDANRALMGSNMQRQAVPLLRADSPLVGTGMERVVARDSGVSVVARHNGVVESVDASRIVVKIDEDEYDETGTGVDIYNLIKFARSNQNTCINQRPVVKIGDHVKRGDVIADGPSTDMGELALGQNVLVAFMPWGGYNFEDSILISERLVKDDRYTSIHIEEFECVARDTKLGKEEITADIPNLGEETLKDLDESGIIRIGAEVRPGDILIGKITPKGETQLSPEEKLLRAIFGEKAGDVRDTSLRVPPGVEGTVIGAKIFSRKGADKDARTELIEQAEEKKLRKDEQDEIRIIRESAVSKLKKLLVGKTAAVKVEGKDGKILIVKGKAISEEALSSIPIDRWDEISVADDESTDDKVAQILSTLNQQIDIIKYVFDDKVQKLKRGDDLPPGVIKMVKVYIAIKRKLQVGDKMAGRHGNKGVVSRILPEEDMPYLEDGRPVEIVLNPLGVPSRMNVGQILETHLGWAAKGIGWQIEEMLEKNSEKTKIKTYLKEVYGNKEMNKFLDTLDDEELSNVAKRLKRGVPMASPVFEGSSEEGIREMLGKAGFAHTAQVTLYDGKSGDAFKHKVTVGVMYVLKLHHLVDDKIHARSIGPYSLVTQQPLGGKAQFGGQRLGEMEVWAMEAYGAAYALQEFLTVKSDDVAGRTRMYEAIVKGKHTLEPGLPESFNVLIKELQSLGLDVELLENEED</sequence>
<feature type="chain" id="PRO_1000165808" description="DNA-directed RNA polymerase subunit beta">
    <location>
        <begin position="1"/>
        <end position="1370"/>
    </location>
</feature>
<gene>
    <name evidence="1" type="primary">rpoB</name>
    <name type="ordered locus">Geob_3632</name>
</gene>
<name>RPOB_GEODF</name>
<organism>
    <name type="scientific">Geotalea daltonii (strain DSM 22248 / JCM 15807 / FRC-32)</name>
    <name type="common">Geobacter daltonii</name>
    <dbReference type="NCBI Taxonomy" id="316067"/>
    <lineage>
        <taxon>Bacteria</taxon>
        <taxon>Pseudomonadati</taxon>
        <taxon>Thermodesulfobacteriota</taxon>
        <taxon>Desulfuromonadia</taxon>
        <taxon>Geobacterales</taxon>
        <taxon>Geobacteraceae</taxon>
        <taxon>Geotalea</taxon>
    </lineage>
</organism>